<name>RPOE_STRGC</name>
<evidence type="ECO:0000255" key="1">
    <source>
        <dbReference type="HAMAP-Rule" id="MF_00357"/>
    </source>
</evidence>
<evidence type="ECO:0000255" key="2">
    <source>
        <dbReference type="PROSITE-ProRule" id="PRU01261"/>
    </source>
</evidence>
<evidence type="ECO:0000256" key="3">
    <source>
        <dbReference type="SAM" id="MobiDB-lite"/>
    </source>
</evidence>
<keyword id="KW-0240">DNA-directed RNA polymerase</keyword>
<keyword id="KW-0548">Nucleotidyltransferase</keyword>
<keyword id="KW-1185">Reference proteome</keyword>
<keyword id="KW-0804">Transcription</keyword>
<keyword id="KW-0808">Transferase</keyword>
<dbReference type="EMBL" id="CP000725">
    <property type="protein sequence ID" value="ABV10698.1"/>
    <property type="molecule type" value="Genomic_DNA"/>
</dbReference>
<dbReference type="RefSeq" id="WP_008808428.1">
    <property type="nucleotide sequence ID" value="NC_009785.1"/>
</dbReference>
<dbReference type="SMR" id="A8AVB9"/>
<dbReference type="STRING" id="467705.SGO_0413"/>
<dbReference type="KEGG" id="sgo:SGO_0413"/>
<dbReference type="eggNOG" id="COG3343">
    <property type="taxonomic scope" value="Bacteria"/>
</dbReference>
<dbReference type="HOGENOM" id="CLU_116648_0_0_9"/>
<dbReference type="Proteomes" id="UP000001131">
    <property type="component" value="Chromosome"/>
</dbReference>
<dbReference type="GO" id="GO:0000428">
    <property type="term" value="C:DNA-directed RNA polymerase complex"/>
    <property type="evidence" value="ECO:0007669"/>
    <property type="project" value="UniProtKB-KW"/>
</dbReference>
<dbReference type="GO" id="GO:0003899">
    <property type="term" value="F:DNA-directed RNA polymerase activity"/>
    <property type="evidence" value="ECO:0007669"/>
    <property type="project" value="UniProtKB-UniRule"/>
</dbReference>
<dbReference type="GO" id="GO:0006351">
    <property type="term" value="P:DNA-templated transcription"/>
    <property type="evidence" value="ECO:0007669"/>
    <property type="project" value="InterPro"/>
</dbReference>
<dbReference type="GO" id="GO:0006355">
    <property type="term" value="P:regulation of DNA-templated transcription"/>
    <property type="evidence" value="ECO:0007669"/>
    <property type="project" value="UniProtKB-UniRule"/>
</dbReference>
<dbReference type="Gene3D" id="1.10.10.1250">
    <property type="entry name" value="RNA polymerase, subunit delta, N-terminal domain"/>
    <property type="match status" value="1"/>
</dbReference>
<dbReference type="HAMAP" id="MF_00357">
    <property type="entry name" value="RNApol_bact_RpoE"/>
    <property type="match status" value="1"/>
</dbReference>
<dbReference type="InterPro" id="IPR007759">
    <property type="entry name" value="Asxl_HARE-HTH"/>
</dbReference>
<dbReference type="InterPro" id="IPR038087">
    <property type="entry name" value="RNAP_delta_N_dom_sf"/>
</dbReference>
<dbReference type="InterPro" id="IPR029757">
    <property type="entry name" value="RpoE"/>
</dbReference>
<dbReference type="NCBIfam" id="TIGR04567">
    <property type="entry name" value="RNAP_delt_lowGC"/>
    <property type="match status" value="1"/>
</dbReference>
<dbReference type="Pfam" id="PF05066">
    <property type="entry name" value="HARE-HTH"/>
    <property type="match status" value="1"/>
</dbReference>
<dbReference type="PROSITE" id="PS51913">
    <property type="entry name" value="HTH_HARE"/>
    <property type="match status" value="1"/>
</dbReference>
<organism>
    <name type="scientific">Streptococcus gordonii (strain Challis / ATCC 35105 / BCRC 15272 / CH1 / DL1 / V288)</name>
    <dbReference type="NCBI Taxonomy" id="467705"/>
    <lineage>
        <taxon>Bacteria</taxon>
        <taxon>Bacillati</taxon>
        <taxon>Bacillota</taxon>
        <taxon>Bacilli</taxon>
        <taxon>Lactobacillales</taxon>
        <taxon>Streptococcaceae</taxon>
        <taxon>Streptococcus</taxon>
    </lineage>
</organism>
<comment type="function">
    <text evidence="1">Participates in both the initiation and recycling phases of transcription. In the presence of the delta subunit, RNAP displays an increased specificity of transcription, a decreased affinity for nucleic acids, and an increased efficiency of RNA synthesis because of enhanced recycling.</text>
</comment>
<comment type="subunit">
    <text evidence="1">RNAP is composed of a core of 2 alpha, a beta and a beta' subunits. The core is associated with a delta subunit and one of several sigma factors.</text>
</comment>
<comment type="similarity">
    <text evidence="1">Belongs to the RpoE family.</text>
</comment>
<protein>
    <recommendedName>
        <fullName evidence="1">Probable DNA-directed RNA polymerase subunit delta</fullName>
    </recommendedName>
    <alternativeName>
        <fullName evidence="1">RNAP delta factor</fullName>
    </alternativeName>
</protein>
<proteinExistence type="inferred from homology"/>
<reference key="1">
    <citation type="journal article" date="2007" name="J. Bacteriol.">
        <title>Genome-wide transcriptional changes in Streptococcus gordonii in response to competence signaling peptide.</title>
        <authorList>
            <person name="Vickerman M.M."/>
            <person name="Iobst S."/>
            <person name="Jesionowski A.M."/>
            <person name="Gill S.R."/>
        </authorList>
    </citation>
    <scope>NUCLEOTIDE SEQUENCE [LARGE SCALE GENOMIC DNA]</scope>
    <source>
        <strain>Challis / ATCC 35105 / BCRC 15272 / CH1 / DL1 / V288</strain>
    </source>
</reference>
<gene>
    <name evidence="1" type="primary">rpoE</name>
    <name type="ordered locus">SGO_0413</name>
</gene>
<accession>A8AVB9</accession>
<sequence>MELEVFAGQEKSELSMIEVARAILELRGRDHEMYFNDLVNEIQTYLEKSNSEIREALPLFYTELNVDGSFIPLGDNKWGLRSWYAIDEVDEEIIALEETDEEDNPKSRKKKRVNAFMDGDEDAIDYSDDDPEDEDSYEADPALNYDDENPDDEKNEADAYDAEINEIAPDDLDEDVDINEEDDEFSDDDAEGEEE</sequence>
<feature type="chain" id="PRO_1000079393" description="Probable DNA-directed RNA polymerase subunit delta">
    <location>
        <begin position="1"/>
        <end position="195"/>
    </location>
</feature>
<feature type="domain" description="HTH HARE-type" evidence="2">
    <location>
        <begin position="14"/>
        <end position="83"/>
    </location>
</feature>
<feature type="region of interest" description="Disordered" evidence="3">
    <location>
        <begin position="119"/>
        <end position="195"/>
    </location>
</feature>
<feature type="compositionally biased region" description="Acidic residues" evidence="3">
    <location>
        <begin position="119"/>
        <end position="138"/>
    </location>
</feature>
<feature type="compositionally biased region" description="Acidic residues" evidence="3">
    <location>
        <begin position="145"/>
        <end position="195"/>
    </location>
</feature>